<keyword id="KW-0067">ATP-binding</keyword>
<keyword id="KW-0175">Coiled coil</keyword>
<keyword id="KW-0963">Cytoplasm</keyword>
<keyword id="KW-0206">Cytoskeleton</keyword>
<keyword id="KW-0493">Microtubule</keyword>
<keyword id="KW-0505">Motor protein</keyword>
<keyword id="KW-0547">Nucleotide-binding</keyword>
<keyword id="KW-1185">Reference proteome</keyword>
<keyword id="KW-0677">Repeat</keyword>
<feature type="chain" id="PRO_0000342333" description="Kinesin-like protein KIN-UA">
    <location>
        <begin position="1"/>
        <end position="945"/>
    </location>
</feature>
<feature type="domain" description="Kinesin motor" evidence="3">
    <location>
        <begin position="57"/>
        <end position="399"/>
    </location>
</feature>
<feature type="repeat" description="ARM 1">
    <location>
        <begin position="683"/>
        <end position="722"/>
    </location>
</feature>
<feature type="repeat" description="ARM 2">
    <location>
        <begin position="724"/>
        <end position="764"/>
    </location>
</feature>
<feature type="repeat" description="ARM 3">
    <location>
        <begin position="766"/>
        <end position="806"/>
    </location>
</feature>
<feature type="repeat" description="ARM 4">
    <location>
        <begin position="808"/>
        <end position="847"/>
    </location>
</feature>
<feature type="region of interest" description="Disordered" evidence="4">
    <location>
        <begin position="1"/>
        <end position="54"/>
    </location>
</feature>
<feature type="coiled-coil region" evidence="2">
    <location>
        <begin position="415"/>
        <end position="644"/>
    </location>
</feature>
<feature type="short sequence motif" description="D-BOX" evidence="1">
    <location>
        <begin position="369"/>
        <end position="377"/>
    </location>
</feature>
<feature type="compositionally biased region" description="Low complexity" evidence="4">
    <location>
        <begin position="22"/>
        <end position="31"/>
    </location>
</feature>
<feature type="binding site" evidence="3">
    <location>
        <begin position="142"/>
        <end position="149"/>
    </location>
    <ligand>
        <name>ATP</name>
        <dbReference type="ChEBI" id="CHEBI:30616"/>
    </ligand>
</feature>
<gene>
    <name evidence="7" type="primary">KINUA</name>
    <name evidence="8" type="ordered locus">Os03g0152900</name>
    <name evidence="5" type="ordered locus">LOC_Os03g05820</name>
</gene>
<sequence length="945" mass="104750">MAANGRASVRPVERHGAPPRPAGRSRSVAPPSRRPSPSPSRARPAAADNDGGSDSCRVRVAVRLRPKNSEDLAHGADFDSCVELQPECKKLKLKKNNWSCESYRFDEVFSENASQKRVYEVVAKPVVESVLEGYNGTVMAYGQTGTGKTYTVGRLGNDDPSEGGIMVRALEHILSVMSLETDSVAISFLQLYLESVQDLLAPEKTNIPIVEDPKTGEVSLPGAAKVEIRDLEHVFQLLQIGEMNRHAANTKMNTESSRSHAILIIHIQRSSRIEDGSNTSLPNGTDNLFPDNLPLVLKSKLLIVDLAGSERIDKSGSEGHMIEEAKFINLSLTSLGKCINALAENSPHIPTRDSKLTRILRDSFGGTARTSLIVTIGPSSRHFSETSSTIMFGQRAMKIVNTIRIKEEVDYESLYKKVEHEVDHLTSEMERQQKLKNSEKMQLEKKLKESEASLNDLKVTSNMQIENMAMEKRQLESTIKRLMLDLEKEKGKNNILSEQIIHLETSLDENKQKQLENISNTNILADTTKSHEKKIRELLKQLEDERSRSASMNDHLNVLQQQLSDAQNYFQKNIACELEKQLSRTTEEFASQISSLEERIADLISEKELVYEELKSTQEKMQQEMRHRQGLEDEILRLKQSLADNCSEESKALCGMVRSGSGLGSVPFMSKSGKSRELLSSQRSNISKIFEEVGLPNVLALLKSDELEVQIHAVKVVANLAAEDVNQEKIVEEGGLDALLSLLETSENTTIHRVTAGAIANLAMNGSNQGLIMNKGGARLLANIASKTNDPQTLRMVAGALANLCGNEKLHVMLKQDGGIKALLGMFRTGHNEVIAQIARGMANFAKCESRVISQGHRKGRSLLIEEGVLNWMVANSSAFSASTRRHIELAFCHLAQNEDNARDIILTGGIKELLRISRESSRDDTRNLAKKALNSNPAFFKEIQ</sequence>
<evidence type="ECO:0000250" key="1">
    <source>
        <dbReference type="UniProtKB" id="Q9FZ06"/>
    </source>
</evidence>
<evidence type="ECO:0000255" key="2"/>
<evidence type="ECO:0000255" key="3">
    <source>
        <dbReference type="PROSITE-ProRule" id="PRU00283"/>
    </source>
</evidence>
<evidence type="ECO:0000256" key="4">
    <source>
        <dbReference type="SAM" id="MobiDB-lite"/>
    </source>
</evidence>
<evidence type="ECO:0000303" key="5">
    <source>
    </source>
</evidence>
<evidence type="ECO:0000303" key="6">
    <source>
    </source>
</evidence>
<evidence type="ECO:0000305" key="7"/>
<evidence type="ECO:0000312" key="8">
    <source>
        <dbReference type="EMBL" id="BAS82346.1"/>
    </source>
</evidence>
<name>KINUA_ORYSJ</name>
<comment type="subcellular location">
    <subcellularLocation>
        <location evidence="7">Cytoplasm</location>
        <location evidence="7">Cytoskeleton</location>
    </subcellularLocation>
</comment>
<comment type="domain">
    <text evidence="1">D-BOX motif functions as a recognition motif for the ubiquitination machinery.</text>
</comment>
<comment type="similarity">
    <text evidence="6">Belongs to the TRAFAC class myosin-kinesin ATPase superfamily. Kinesin family. Ungrouped subfamily.</text>
</comment>
<comment type="sequence caution" evidence="7">
    <conflict type="erroneous gene model prediction">
        <sequence resource="EMBL-CDS" id="ABF94031"/>
    </conflict>
</comment>
<comment type="sequence caution" evidence="7">
    <conflict type="frameshift">
        <sequence resource="EMBL" id="AK288414"/>
    </conflict>
</comment>
<comment type="sequence caution" evidence="7">
    <conflict type="erroneous gene model prediction">
        <sequence resource="EMBL-CDS" id="BAF10910"/>
    </conflict>
</comment>
<reference key="1">
    <citation type="journal article" date="2005" name="Genome Res.">
        <title>Sequence, annotation, and analysis of synteny between rice chromosome 3 and diverged grass species.</title>
        <authorList>
            <consortium name="The rice chromosome 3 sequencing consortium"/>
            <person name="Buell C.R."/>
            <person name="Yuan Q."/>
            <person name="Ouyang S."/>
            <person name="Liu J."/>
            <person name="Zhu W."/>
            <person name="Wang A."/>
            <person name="Maiti R."/>
            <person name="Haas B."/>
            <person name="Wortman J."/>
            <person name="Pertea M."/>
            <person name="Jones K.M."/>
            <person name="Kim M."/>
            <person name="Overton L."/>
            <person name="Tsitrin T."/>
            <person name="Fadrosh D."/>
            <person name="Bera J."/>
            <person name="Weaver B."/>
            <person name="Jin S."/>
            <person name="Johri S."/>
            <person name="Reardon M."/>
            <person name="Webb K."/>
            <person name="Hill J."/>
            <person name="Moffat K."/>
            <person name="Tallon L."/>
            <person name="Van Aken S."/>
            <person name="Lewis M."/>
            <person name="Utterback T."/>
            <person name="Feldblyum T."/>
            <person name="Zismann V."/>
            <person name="Iobst S."/>
            <person name="Hsiao J."/>
            <person name="de Vazeille A.R."/>
            <person name="Salzberg S.L."/>
            <person name="White O."/>
            <person name="Fraser C.M."/>
            <person name="Yu Y."/>
            <person name="Kim H."/>
            <person name="Rambo T."/>
            <person name="Currie J."/>
            <person name="Collura K."/>
            <person name="Kernodle-Thompson S."/>
            <person name="Wei F."/>
            <person name="Kudrna K."/>
            <person name="Ammiraju J.S.S."/>
            <person name="Luo M."/>
            <person name="Goicoechea J.L."/>
            <person name="Wing R.A."/>
            <person name="Henry D."/>
            <person name="Oates R."/>
            <person name="Palmer M."/>
            <person name="Pries G."/>
            <person name="Saski C."/>
            <person name="Simmons J."/>
            <person name="Soderlund C."/>
            <person name="Nelson W."/>
            <person name="de la Bastide M."/>
            <person name="Spiegel L."/>
            <person name="Nascimento L."/>
            <person name="Huang E."/>
            <person name="Preston R."/>
            <person name="Zutavern T."/>
            <person name="Palmer L."/>
            <person name="O'Shaughnessy A."/>
            <person name="Dike S."/>
            <person name="McCombie W.R."/>
            <person name="Minx P."/>
            <person name="Cordum H."/>
            <person name="Wilson R."/>
            <person name="Jin W."/>
            <person name="Lee H.R."/>
            <person name="Jiang J."/>
            <person name="Jackson S."/>
        </authorList>
    </citation>
    <scope>NUCLEOTIDE SEQUENCE [LARGE SCALE GENOMIC DNA]</scope>
    <source>
        <strain>cv. Nipponbare</strain>
    </source>
</reference>
<reference key="2">
    <citation type="journal article" date="2005" name="Nature">
        <title>The map-based sequence of the rice genome.</title>
        <authorList>
            <consortium name="International rice genome sequencing project (IRGSP)"/>
        </authorList>
    </citation>
    <scope>NUCLEOTIDE SEQUENCE [LARGE SCALE GENOMIC DNA]</scope>
    <source>
        <strain>cv. Nipponbare</strain>
    </source>
</reference>
<reference key="3">
    <citation type="journal article" date="2008" name="Nucleic Acids Res.">
        <title>The rice annotation project database (RAP-DB): 2008 update.</title>
        <authorList>
            <consortium name="The rice annotation project (RAP)"/>
        </authorList>
    </citation>
    <scope>GENOME REANNOTATION</scope>
    <source>
        <strain>cv. Nipponbare</strain>
    </source>
</reference>
<reference key="4">
    <citation type="journal article" date="2013" name="Rice">
        <title>Improvement of the Oryza sativa Nipponbare reference genome using next generation sequence and optical map data.</title>
        <authorList>
            <person name="Kawahara Y."/>
            <person name="de la Bastide M."/>
            <person name="Hamilton J.P."/>
            <person name="Kanamori H."/>
            <person name="McCombie W.R."/>
            <person name="Ouyang S."/>
            <person name="Schwartz D.C."/>
            <person name="Tanaka T."/>
            <person name="Wu J."/>
            <person name="Zhou S."/>
            <person name="Childs K.L."/>
            <person name="Davidson R.M."/>
            <person name="Lin H."/>
            <person name="Quesada-Ocampo L."/>
            <person name="Vaillancourt B."/>
            <person name="Sakai H."/>
            <person name="Lee S.S."/>
            <person name="Kim J."/>
            <person name="Numa H."/>
            <person name="Itoh T."/>
            <person name="Buell C.R."/>
            <person name="Matsumoto T."/>
        </authorList>
    </citation>
    <scope>GENOME REANNOTATION</scope>
    <source>
        <strain>cv. Nipponbare</strain>
    </source>
</reference>
<reference key="5">
    <citation type="submission" date="2007-09" db="EMBL/GenBank/DDBJ databases">
        <title>Oryza sativa full length cDNA.</title>
        <authorList>
            <consortium name="The rice full-length cDNA consortium"/>
        </authorList>
    </citation>
    <scope>NUCLEOTIDE SEQUENCE [LARGE SCALE MRNA]</scope>
    <source>
        <strain>cv. Nipponbare</strain>
    </source>
</reference>
<reference key="6">
    <citation type="journal article" date="2009" name="Ann. Bot.">
        <title>Evaluating the microtubule cytoskeleton and its interacting proteins in monocots by mining the rice genome.</title>
        <authorList>
            <person name="Guo L."/>
            <person name="Ho C.M."/>
            <person name="Kong Z."/>
            <person name="Lee Y.R."/>
            <person name="Qian Q."/>
            <person name="Liu B."/>
        </authorList>
    </citation>
    <scope>GENE FAMILY</scope>
    <scope>NOMENCLATURE</scope>
</reference>
<dbReference type="EMBL" id="DP000009">
    <property type="protein sequence ID" value="ABF94031.1"/>
    <property type="status" value="ALT_SEQ"/>
    <property type="molecule type" value="Genomic_DNA"/>
</dbReference>
<dbReference type="EMBL" id="AP008209">
    <property type="protein sequence ID" value="BAF10910.2"/>
    <property type="status" value="ALT_SEQ"/>
    <property type="molecule type" value="Genomic_DNA"/>
</dbReference>
<dbReference type="EMBL" id="AP014959">
    <property type="protein sequence ID" value="BAS82346.1"/>
    <property type="molecule type" value="Genomic_DNA"/>
</dbReference>
<dbReference type="EMBL" id="AK288414">
    <property type="status" value="NOT_ANNOTATED_CDS"/>
    <property type="molecule type" value="mRNA"/>
</dbReference>
<dbReference type="RefSeq" id="XP_015629885.1">
    <property type="nucleotide sequence ID" value="XM_015774399.1"/>
</dbReference>
<dbReference type="SMR" id="Q0DV28"/>
<dbReference type="FunCoup" id="Q0DV28">
    <property type="interactions" value="94"/>
</dbReference>
<dbReference type="STRING" id="39947.Q0DV28"/>
<dbReference type="PaxDb" id="39947-Q0DV28"/>
<dbReference type="EnsemblPlants" id="Os03t0152900-01">
    <property type="protein sequence ID" value="Os03t0152900-01"/>
    <property type="gene ID" value="Os03g0152900"/>
</dbReference>
<dbReference type="Gramene" id="Os03t0152900-01">
    <property type="protein sequence ID" value="Os03t0152900-01"/>
    <property type="gene ID" value="Os03g0152900"/>
</dbReference>
<dbReference type="KEGG" id="dosa:Os03g0152900"/>
<dbReference type="eggNOG" id="KOG0240">
    <property type="taxonomic scope" value="Eukaryota"/>
</dbReference>
<dbReference type="HOGENOM" id="CLU_014436_0_0_1"/>
<dbReference type="InParanoid" id="Q0DV28"/>
<dbReference type="OMA" id="FRTGHNE"/>
<dbReference type="OrthoDB" id="3176171at2759"/>
<dbReference type="Proteomes" id="UP000000763">
    <property type="component" value="Chromosome 3"/>
</dbReference>
<dbReference type="Proteomes" id="UP000059680">
    <property type="component" value="Chromosome 3"/>
</dbReference>
<dbReference type="GO" id="GO:0005737">
    <property type="term" value="C:cytoplasm"/>
    <property type="evidence" value="ECO:0000318"/>
    <property type="project" value="GO_Central"/>
</dbReference>
<dbReference type="GO" id="GO:0005871">
    <property type="term" value="C:kinesin complex"/>
    <property type="evidence" value="ECO:0000318"/>
    <property type="project" value="GO_Central"/>
</dbReference>
<dbReference type="GO" id="GO:0005874">
    <property type="term" value="C:microtubule"/>
    <property type="evidence" value="ECO:0000318"/>
    <property type="project" value="GO_Central"/>
</dbReference>
<dbReference type="GO" id="GO:0005524">
    <property type="term" value="F:ATP binding"/>
    <property type="evidence" value="ECO:0007669"/>
    <property type="project" value="UniProtKB-KW"/>
</dbReference>
<dbReference type="GO" id="GO:0016887">
    <property type="term" value="F:ATP hydrolysis activity"/>
    <property type="evidence" value="ECO:0000318"/>
    <property type="project" value="GO_Central"/>
</dbReference>
<dbReference type="GO" id="GO:0008017">
    <property type="term" value="F:microtubule binding"/>
    <property type="evidence" value="ECO:0000318"/>
    <property type="project" value="GO_Central"/>
</dbReference>
<dbReference type="GO" id="GO:0008574">
    <property type="term" value="F:plus-end-directed microtubule motor activity"/>
    <property type="evidence" value="ECO:0000318"/>
    <property type="project" value="GO_Central"/>
</dbReference>
<dbReference type="GO" id="GO:0030705">
    <property type="term" value="P:cytoskeleton-dependent intracellular transport"/>
    <property type="evidence" value="ECO:0000318"/>
    <property type="project" value="GO_Central"/>
</dbReference>
<dbReference type="GO" id="GO:0007018">
    <property type="term" value="P:microtubule-based movement"/>
    <property type="evidence" value="ECO:0000318"/>
    <property type="project" value="GO_Central"/>
</dbReference>
<dbReference type="CDD" id="cd00106">
    <property type="entry name" value="KISc"/>
    <property type="match status" value="1"/>
</dbReference>
<dbReference type="FunFam" id="1.25.10.10:FF:000357">
    <property type="entry name" value="Kinesin-like protein"/>
    <property type="match status" value="1"/>
</dbReference>
<dbReference type="FunFam" id="3.40.850.10:FF:000036">
    <property type="entry name" value="Kinesin-like protein"/>
    <property type="match status" value="1"/>
</dbReference>
<dbReference type="Gene3D" id="3.40.850.10">
    <property type="entry name" value="Kinesin motor domain"/>
    <property type="match status" value="1"/>
</dbReference>
<dbReference type="Gene3D" id="1.25.10.10">
    <property type="entry name" value="Leucine-rich Repeat Variant"/>
    <property type="match status" value="1"/>
</dbReference>
<dbReference type="InterPro" id="IPR011989">
    <property type="entry name" value="ARM-like"/>
</dbReference>
<dbReference type="InterPro" id="IPR016024">
    <property type="entry name" value="ARM-type_fold"/>
</dbReference>
<dbReference type="InterPro" id="IPR000225">
    <property type="entry name" value="Armadillo"/>
</dbReference>
<dbReference type="InterPro" id="IPR047149">
    <property type="entry name" value="KIF11-like"/>
</dbReference>
<dbReference type="InterPro" id="IPR019821">
    <property type="entry name" value="Kinesin_motor_CS"/>
</dbReference>
<dbReference type="InterPro" id="IPR001752">
    <property type="entry name" value="Kinesin_motor_dom"/>
</dbReference>
<dbReference type="InterPro" id="IPR036961">
    <property type="entry name" value="Kinesin_motor_dom_sf"/>
</dbReference>
<dbReference type="InterPro" id="IPR027417">
    <property type="entry name" value="P-loop_NTPase"/>
</dbReference>
<dbReference type="PANTHER" id="PTHR47970">
    <property type="entry name" value="KINESIN-LIKE PROTEIN KIF11"/>
    <property type="match status" value="1"/>
</dbReference>
<dbReference type="PANTHER" id="PTHR47970:SF6">
    <property type="entry name" value="KINESIN-LIKE PROTEIN KIN-UC ISOFORM X1"/>
    <property type="match status" value="1"/>
</dbReference>
<dbReference type="Pfam" id="PF00514">
    <property type="entry name" value="Arm"/>
    <property type="match status" value="1"/>
</dbReference>
<dbReference type="Pfam" id="PF00225">
    <property type="entry name" value="Kinesin"/>
    <property type="match status" value="1"/>
</dbReference>
<dbReference type="PRINTS" id="PR00380">
    <property type="entry name" value="KINESINHEAVY"/>
</dbReference>
<dbReference type="SMART" id="SM00185">
    <property type="entry name" value="ARM"/>
    <property type="match status" value="4"/>
</dbReference>
<dbReference type="SMART" id="SM00129">
    <property type="entry name" value="KISc"/>
    <property type="match status" value="1"/>
</dbReference>
<dbReference type="SUPFAM" id="SSF48371">
    <property type="entry name" value="ARM repeat"/>
    <property type="match status" value="1"/>
</dbReference>
<dbReference type="SUPFAM" id="SSF52540">
    <property type="entry name" value="P-loop containing nucleoside triphosphate hydrolases"/>
    <property type="match status" value="1"/>
</dbReference>
<dbReference type="PROSITE" id="PS50176">
    <property type="entry name" value="ARM_REPEAT"/>
    <property type="match status" value="2"/>
</dbReference>
<dbReference type="PROSITE" id="PS00411">
    <property type="entry name" value="KINESIN_MOTOR_1"/>
    <property type="match status" value="1"/>
</dbReference>
<dbReference type="PROSITE" id="PS50067">
    <property type="entry name" value="KINESIN_MOTOR_2"/>
    <property type="match status" value="1"/>
</dbReference>
<proteinExistence type="evidence at transcript level"/>
<accession>Q0DV28</accession>
<accession>A0A0P0VT41</accession>
<accession>Q10RM7</accession>
<organism>
    <name type="scientific">Oryza sativa subsp. japonica</name>
    <name type="common">Rice</name>
    <dbReference type="NCBI Taxonomy" id="39947"/>
    <lineage>
        <taxon>Eukaryota</taxon>
        <taxon>Viridiplantae</taxon>
        <taxon>Streptophyta</taxon>
        <taxon>Embryophyta</taxon>
        <taxon>Tracheophyta</taxon>
        <taxon>Spermatophyta</taxon>
        <taxon>Magnoliopsida</taxon>
        <taxon>Liliopsida</taxon>
        <taxon>Poales</taxon>
        <taxon>Poaceae</taxon>
        <taxon>BOP clade</taxon>
        <taxon>Oryzoideae</taxon>
        <taxon>Oryzeae</taxon>
        <taxon>Oryzinae</taxon>
        <taxon>Oryza</taxon>
        <taxon>Oryza sativa</taxon>
    </lineage>
</organism>
<protein>
    <recommendedName>
        <fullName evidence="7">Kinesin-like protein KIN-UA</fullName>
    </recommendedName>
    <alternativeName>
        <fullName evidence="7">Protein ARMADILLO REPEAT KINESIN1</fullName>
    </alternativeName>
</protein>